<organism>
    <name type="scientific">Pyricularia oryzae (strain 70-15 / ATCC MYA-4617 / FGSC 8958)</name>
    <name type="common">Rice blast fungus</name>
    <name type="synonym">Magnaporthe oryzae</name>
    <dbReference type="NCBI Taxonomy" id="242507"/>
    <lineage>
        <taxon>Eukaryota</taxon>
        <taxon>Fungi</taxon>
        <taxon>Dikarya</taxon>
        <taxon>Ascomycota</taxon>
        <taxon>Pezizomycotina</taxon>
        <taxon>Sordariomycetes</taxon>
        <taxon>Sordariomycetidae</taxon>
        <taxon>Magnaporthales</taxon>
        <taxon>Pyriculariaceae</taxon>
        <taxon>Pyricularia</taxon>
    </lineage>
</organism>
<comment type="function">
    <text evidence="6">ATPase component of the INO80 complex which remodels chromatin by shifting nucleosomes and is involved in DNA repair.</text>
</comment>
<comment type="catalytic activity">
    <reaction evidence="1">
        <text>ATP + H2O = ADP + phosphate + H(+)</text>
        <dbReference type="Rhea" id="RHEA:13065"/>
        <dbReference type="ChEBI" id="CHEBI:15377"/>
        <dbReference type="ChEBI" id="CHEBI:15378"/>
        <dbReference type="ChEBI" id="CHEBI:30616"/>
        <dbReference type="ChEBI" id="CHEBI:43474"/>
        <dbReference type="ChEBI" id="CHEBI:456216"/>
    </reaction>
</comment>
<comment type="subunit">
    <text evidence="6">Component of the INO80 chromatin-remodeling complex.</text>
</comment>
<comment type="subcellular location">
    <subcellularLocation>
        <location evidence="6">Nucleus</location>
    </subcellularLocation>
</comment>
<comment type="domain">
    <text evidence="2">The DBINO region is involved in binding to DNA.</text>
</comment>
<comment type="similarity">
    <text evidence="8">Belongs to the SNF2/RAD54 helicase family.</text>
</comment>
<reference key="1">
    <citation type="journal article" date="2005" name="Nature">
        <title>The genome sequence of the rice blast fungus Magnaporthe grisea.</title>
        <authorList>
            <person name="Dean R.A."/>
            <person name="Talbot N.J."/>
            <person name="Ebbole D.J."/>
            <person name="Farman M.L."/>
            <person name="Mitchell T.K."/>
            <person name="Orbach M.J."/>
            <person name="Thon M.R."/>
            <person name="Kulkarni R."/>
            <person name="Xu J.-R."/>
            <person name="Pan H."/>
            <person name="Read N.D."/>
            <person name="Lee Y.-H."/>
            <person name="Carbone I."/>
            <person name="Brown D."/>
            <person name="Oh Y.Y."/>
            <person name="Donofrio N."/>
            <person name="Jeong J.S."/>
            <person name="Soanes D.M."/>
            <person name="Djonovic S."/>
            <person name="Kolomiets E."/>
            <person name="Rehmeyer C."/>
            <person name="Li W."/>
            <person name="Harding M."/>
            <person name="Kim S."/>
            <person name="Lebrun M.-H."/>
            <person name="Bohnert H."/>
            <person name="Coughlan S."/>
            <person name="Butler J."/>
            <person name="Calvo S.E."/>
            <person name="Ma L.-J."/>
            <person name="Nicol R."/>
            <person name="Purcell S."/>
            <person name="Nusbaum C."/>
            <person name="Galagan J.E."/>
            <person name="Birren B.W."/>
        </authorList>
    </citation>
    <scope>NUCLEOTIDE SEQUENCE [LARGE SCALE GENOMIC DNA]</scope>
    <source>
        <strain>70-15 / ATCC MYA-4617 / FGSC 8958</strain>
    </source>
</reference>
<accession>A4R227</accession>
<accession>G4MLP8</accession>
<keyword id="KW-0010">Activator</keyword>
<keyword id="KW-0067">ATP-binding</keyword>
<keyword id="KW-0175">Coiled coil</keyword>
<keyword id="KW-0227">DNA damage</keyword>
<keyword id="KW-0234">DNA repair</keyword>
<keyword id="KW-0238">DNA-binding</keyword>
<keyword id="KW-0378">Hydrolase</keyword>
<keyword id="KW-0547">Nucleotide-binding</keyword>
<keyword id="KW-0539">Nucleus</keyword>
<keyword id="KW-1185">Reference proteome</keyword>
<keyword id="KW-0804">Transcription</keyword>
<keyword id="KW-0805">Transcription regulation</keyword>
<feature type="chain" id="PRO_0000350960" description="Chromatin-remodeling ATPase INO80">
    <location>
        <begin position="1"/>
        <end position="1944"/>
    </location>
</feature>
<feature type="domain" description="DBINO" evidence="6">
    <location>
        <begin position="840"/>
        <end position="965"/>
    </location>
</feature>
<feature type="domain" description="Helicase ATP-binding" evidence="4">
    <location>
        <begin position="1090"/>
        <end position="1262"/>
    </location>
</feature>
<feature type="domain" description="Helicase C-terminal" evidence="5">
    <location>
        <begin position="1663"/>
        <end position="1818"/>
    </location>
</feature>
<feature type="region of interest" description="Disordered" evidence="7">
    <location>
        <begin position="1"/>
        <end position="518"/>
    </location>
</feature>
<feature type="region of interest" description="Disordered" evidence="7">
    <location>
        <begin position="715"/>
        <end position="815"/>
    </location>
</feature>
<feature type="region of interest" description="Disordered" evidence="7">
    <location>
        <begin position="966"/>
        <end position="1003"/>
    </location>
</feature>
<feature type="region of interest" description="Disordered" evidence="7">
    <location>
        <begin position="1862"/>
        <end position="1944"/>
    </location>
</feature>
<feature type="coiled-coil region" evidence="3">
    <location>
        <begin position="506"/>
        <end position="563"/>
    </location>
</feature>
<feature type="coiled-coil region" evidence="3">
    <location>
        <begin position="624"/>
        <end position="696"/>
    </location>
</feature>
<feature type="coiled-coil region" evidence="3">
    <location>
        <begin position="908"/>
        <end position="953"/>
    </location>
</feature>
<feature type="short sequence motif" description="DEAQ box">
    <location>
        <begin position="1213"/>
        <end position="1216"/>
    </location>
</feature>
<feature type="compositionally biased region" description="Low complexity" evidence="7">
    <location>
        <begin position="73"/>
        <end position="83"/>
    </location>
</feature>
<feature type="compositionally biased region" description="Polar residues" evidence="7">
    <location>
        <begin position="84"/>
        <end position="98"/>
    </location>
</feature>
<feature type="compositionally biased region" description="Basic residues" evidence="7">
    <location>
        <begin position="101"/>
        <end position="111"/>
    </location>
</feature>
<feature type="compositionally biased region" description="Polar residues" evidence="7">
    <location>
        <begin position="139"/>
        <end position="149"/>
    </location>
</feature>
<feature type="compositionally biased region" description="Polar residues" evidence="7">
    <location>
        <begin position="208"/>
        <end position="223"/>
    </location>
</feature>
<feature type="compositionally biased region" description="Polar residues" evidence="7">
    <location>
        <begin position="289"/>
        <end position="307"/>
    </location>
</feature>
<feature type="compositionally biased region" description="Low complexity" evidence="7">
    <location>
        <begin position="312"/>
        <end position="323"/>
    </location>
</feature>
<feature type="compositionally biased region" description="Polar residues" evidence="7">
    <location>
        <begin position="327"/>
        <end position="336"/>
    </location>
</feature>
<feature type="compositionally biased region" description="Basic and acidic residues" evidence="7">
    <location>
        <begin position="356"/>
        <end position="382"/>
    </location>
</feature>
<feature type="compositionally biased region" description="Basic and acidic residues" evidence="7">
    <location>
        <begin position="429"/>
        <end position="464"/>
    </location>
</feature>
<feature type="compositionally biased region" description="Basic residues" evidence="7">
    <location>
        <begin position="727"/>
        <end position="739"/>
    </location>
</feature>
<feature type="compositionally biased region" description="Basic and acidic residues" evidence="7">
    <location>
        <begin position="740"/>
        <end position="751"/>
    </location>
</feature>
<feature type="compositionally biased region" description="Basic and acidic residues" evidence="7">
    <location>
        <begin position="782"/>
        <end position="791"/>
    </location>
</feature>
<feature type="compositionally biased region" description="Basic and acidic residues" evidence="7">
    <location>
        <begin position="800"/>
        <end position="815"/>
    </location>
</feature>
<feature type="compositionally biased region" description="Basic and acidic residues" evidence="7">
    <location>
        <begin position="966"/>
        <end position="986"/>
    </location>
</feature>
<feature type="compositionally biased region" description="Basic residues" evidence="7">
    <location>
        <begin position="1862"/>
        <end position="1873"/>
    </location>
</feature>
<feature type="compositionally biased region" description="Basic and acidic residues" evidence="7">
    <location>
        <begin position="1887"/>
        <end position="1900"/>
    </location>
</feature>
<feature type="compositionally biased region" description="Basic residues" evidence="7">
    <location>
        <begin position="1918"/>
        <end position="1932"/>
    </location>
</feature>
<feature type="binding site" evidence="4">
    <location>
        <begin position="1103"/>
        <end position="1110"/>
    </location>
    <ligand>
        <name>ATP</name>
        <dbReference type="ChEBI" id="CHEBI:30616"/>
    </ligand>
</feature>
<protein>
    <recommendedName>
        <fullName evidence="1">Chromatin-remodeling ATPase INO80</fullName>
        <ecNumber evidence="1">3.6.4.-</ecNumber>
    </recommendedName>
</protein>
<gene>
    <name type="primary">INO80</name>
    <name type="ORF">MGG_06776</name>
</gene>
<sequence>MEPSKFHSTVLARPPGMYDEDDDHRRRQRDILNPPAPSQTGPGSGGSSSAGGPRPPFSLRSPTQSEFHHQSSQHHYSASSAASGPQSTYNGANNGVPQSHSHSRSNSHSRHSSSSVLHSPYQQASTASRPAHALDLHRSPQTSGLQAPQRSPGLHAPSVYYSQESREHHPPPPKPIDKPASSGRSFYDPLTDTTTTSTSDRERRTSDAGSSWHNATTNAVSTPTHRDAYNSYSKPAANPSPYYGNGKYTSPSASIYPPRSPASHPQSVATAAAEPISPPTRPPRMATPNILNPTTTSSMAAMSQAESPAQKAAVPAATPSRAAELMSFSNILSSSEPAPKPRPRSPVLAETPNKQPEPEPEREPTKEPSKEPSKEPSKEPSKEPSPPPADMDETSDSPACPEKPAEVDAETEPDAEIHDDVDTVDGLEESEKPEPPIKREKSAKVEKAPRRPRVVEKEKKERVTKAPRKSAGAKGRASEVKAESTPKQSRRSSGKQEALSSSRVPAKRQANGLTKQKAQALEQEKAVVAEMEQLEEEALDESEARAELRAFKKRKLNRQKALETTDLSVATELLPSLKDEAINRHHRRHDFSAEMVLKLGVHVALGRLRFGDHNYDAALKEVREQELFAEKERKKDMQRKRRREKSMAVTIEQKEAALAKAHATEDKLERQKLLREAERANKKAQQTKLILQKGIKGPARNIMPMDVNLEGGSMATFSADSMEPGKGKGKGRAGNRPKKSKEQKQAEKEAAEAAQAALDAGQELPSKEENPKIRIKVNKGKLSKDKDRDVDVDTIDGDNTEIKDTEEPPPKKKGKVVEEVKDTLETRFQSKGYNQIYDQIWRDMARKDVSKVYRLATDSYYTKASNLKKTAILAAKEAKRWQLRTNKGMKDLQARGKRVMRDMMTFWKRNEREERDLRKAAERQELENARKEEADREAARQKRKLNFLISQTELYSHFIGKKIKTDEVERSTDRPEVAAEEQKNKPAGENALTVKEPTGPVGAKVTNFENLDFDAEDDETLQAAAMANAQNAIAEAQRKARNFNNDDEPDEDGEMNFQNPTGLGDVEIEQPKLLTATLKEYQLKGLNWLVNLYEQGINGILADEMGLGKTIQSISVMAYLAEHHDIWGPFLVVAPASTLHNWEQEIKRFVPDLKIVPYWGSASDRKILRKFWDRKHSTYKRDAQFHVAITSYQMVVSDVAYFQKMKWQYMILDEAQAIKSSQSSRWKCLLSFHCRNRLLLTGTPIQNNMQELWALLHFIMPSLFDSHEEFSDWFSKDIESHAQSNSKLNEDQLKRLHMILKPFMLRRVKKHVQKELGDKIELDVYCDLTYRQRAYYANLRNQISIMDLIEKATLGDDNDSGTLMNLVMQFRKVCNHPDLFERADTSSPLALVRFAETGSFAREGNDVTVGYTTRSVVEYILPRLLWRDGGRLTKAGSDNPSAGFRSRYLGEMMNIWSSTNIRESVDGTDNFSFLRFADTSIAEAEKVGKTDLFARASELAQRRNRLANMHVSYDDDEEDNFTPAHALFLIRQRQDRTALSEITSEGALQNLMNVSHVMYEDANLPRMDQAARPGASAPPIEVVCHTSSTQIERDRVLFNVPMRKALFGPNLDEQKEFVLQKVPVEQLPPAPLLPKPDNERQRFTSITVPSMRQFITNSGKLAKLDELLFKLKAGGHRVLLYFQMTRMIDLMEEYLTYRNWKYCRLDGSTKFEDRRDTVHDFQTNPSIFVFLLSTRAGGLGINLTSADTVIFYDSDWNPTIDSQAMDRAHRLGQTRQVTVYRLITRGTIEERIRKRAMQKEEVQRVVITGGAGASSGVDFSGRRAPENRNRDIAMWLADDDQAELIERRERELLESGELDKVAKKRGGGKRKKVAKDMGDGGGVSLDEMYHEGEGNFDDNKLSGAATPNVPDSTDAKPGKKKKATGKKAKTTKQRLAIADGQMDM</sequence>
<evidence type="ECO:0000250" key="1">
    <source>
        <dbReference type="UniProtKB" id="P53115"/>
    </source>
</evidence>
<evidence type="ECO:0000250" key="2">
    <source>
        <dbReference type="UniProtKB" id="Q9ULG1"/>
    </source>
</evidence>
<evidence type="ECO:0000255" key="3"/>
<evidence type="ECO:0000255" key="4">
    <source>
        <dbReference type="PROSITE-ProRule" id="PRU00541"/>
    </source>
</evidence>
<evidence type="ECO:0000255" key="5">
    <source>
        <dbReference type="PROSITE-ProRule" id="PRU00542"/>
    </source>
</evidence>
<evidence type="ECO:0000255" key="6">
    <source>
        <dbReference type="PROSITE-ProRule" id="PRU00746"/>
    </source>
</evidence>
<evidence type="ECO:0000256" key="7">
    <source>
        <dbReference type="SAM" id="MobiDB-lite"/>
    </source>
</evidence>
<evidence type="ECO:0000305" key="8"/>
<proteinExistence type="inferred from homology"/>
<dbReference type="EC" id="3.6.4.-" evidence="1"/>
<dbReference type="EMBL" id="CM001231">
    <property type="protein sequence ID" value="EHA56881.1"/>
    <property type="molecule type" value="Genomic_DNA"/>
</dbReference>
<dbReference type="RefSeq" id="XP_003709493.1">
    <property type="nucleotide sequence ID" value="XM_003709445.1"/>
</dbReference>
<dbReference type="SMR" id="A4R227"/>
<dbReference type="FunCoup" id="A4R227">
    <property type="interactions" value="1046"/>
</dbReference>
<dbReference type="STRING" id="242507.A4R227"/>
<dbReference type="EnsemblFungi" id="MGG_06776T0">
    <property type="protein sequence ID" value="MGG_06776T0"/>
    <property type="gene ID" value="MGG_06776"/>
</dbReference>
<dbReference type="GeneID" id="2684949"/>
<dbReference type="KEGG" id="mgr:MGG_06776"/>
<dbReference type="VEuPathDB" id="FungiDB:MGG_06776"/>
<dbReference type="eggNOG" id="KOG0388">
    <property type="taxonomic scope" value="Eukaryota"/>
</dbReference>
<dbReference type="HOGENOM" id="CLU_000315_26_1_1"/>
<dbReference type="InParanoid" id="A4R227"/>
<dbReference type="OMA" id="NLLGFHC"/>
<dbReference type="OrthoDB" id="372624at2759"/>
<dbReference type="Proteomes" id="UP000009058">
    <property type="component" value="Chromosome 1"/>
</dbReference>
<dbReference type="GO" id="GO:0031011">
    <property type="term" value="C:Ino80 complex"/>
    <property type="evidence" value="ECO:0007669"/>
    <property type="project" value="EnsemblFungi"/>
</dbReference>
<dbReference type="GO" id="GO:0005524">
    <property type="term" value="F:ATP binding"/>
    <property type="evidence" value="ECO:0007669"/>
    <property type="project" value="UniProtKB-KW"/>
</dbReference>
<dbReference type="GO" id="GO:0016887">
    <property type="term" value="F:ATP hydrolysis activity"/>
    <property type="evidence" value="ECO:0007669"/>
    <property type="project" value="RHEA"/>
</dbReference>
<dbReference type="GO" id="GO:0140658">
    <property type="term" value="F:ATP-dependent chromatin remodeler activity"/>
    <property type="evidence" value="ECO:0007669"/>
    <property type="project" value="InterPro"/>
</dbReference>
<dbReference type="GO" id="GO:0003677">
    <property type="term" value="F:DNA binding"/>
    <property type="evidence" value="ECO:0007669"/>
    <property type="project" value="UniProtKB-KW"/>
</dbReference>
<dbReference type="GO" id="GO:0042393">
    <property type="term" value="F:histone binding"/>
    <property type="evidence" value="ECO:0007669"/>
    <property type="project" value="TreeGrafter"/>
</dbReference>
<dbReference type="GO" id="GO:0034080">
    <property type="term" value="P:CENP-A containing chromatin assembly"/>
    <property type="evidence" value="ECO:0007669"/>
    <property type="project" value="EnsemblFungi"/>
</dbReference>
<dbReference type="GO" id="GO:0006281">
    <property type="term" value="P:DNA repair"/>
    <property type="evidence" value="ECO:0007669"/>
    <property type="project" value="UniProtKB-KW"/>
</dbReference>
<dbReference type="GO" id="GO:0006351">
    <property type="term" value="P:DNA-templated transcription"/>
    <property type="evidence" value="ECO:0007669"/>
    <property type="project" value="InterPro"/>
</dbReference>
<dbReference type="GO" id="GO:0060255">
    <property type="term" value="P:regulation of macromolecule metabolic process"/>
    <property type="evidence" value="ECO:0007669"/>
    <property type="project" value="UniProtKB-ARBA"/>
</dbReference>
<dbReference type="CDD" id="cd18002">
    <property type="entry name" value="DEXQc_INO80"/>
    <property type="match status" value="1"/>
</dbReference>
<dbReference type="CDD" id="cd18793">
    <property type="entry name" value="SF2_C_SNF"/>
    <property type="match status" value="1"/>
</dbReference>
<dbReference type="FunFam" id="3.40.50.10810:FF:000006">
    <property type="entry name" value="Putative DNA helicase INO80"/>
    <property type="match status" value="1"/>
</dbReference>
<dbReference type="FunFam" id="3.40.50.300:FF:001269">
    <property type="entry name" value="SNF2 family helicase/ATPase"/>
    <property type="match status" value="1"/>
</dbReference>
<dbReference type="Gene3D" id="3.40.50.300">
    <property type="entry name" value="P-loop containing nucleotide triphosphate hydrolases"/>
    <property type="match status" value="2"/>
</dbReference>
<dbReference type="Gene3D" id="3.40.50.10810">
    <property type="entry name" value="Tandem AAA-ATPase domain"/>
    <property type="match status" value="1"/>
</dbReference>
<dbReference type="InterPro" id="IPR020838">
    <property type="entry name" value="DBINO"/>
</dbReference>
<dbReference type="InterPro" id="IPR031047">
    <property type="entry name" value="DEXQc_INO80"/>
</dbReference>
<dbReference type="InterPro" id="IPR014001">
    <property type="entry name" value="Helicase_ATP-bd"/>
</dbReference>
<dbReference type="InterPro" id="IPR001650">
    <property type="entry name" value="Helicase_C-like"/>
</dbReference>
<dbReference type="InterPro" id="IPR050520">
    <property type="entry name" value="INO80/SWR1_helicase"/>
</dbReference>
<dbReference type="InterPro" id="IPR027417">
    <property type="entry name" value="P-loop_NTPase"/>
</dbReference>
<dbReference type="InterPro" id="IPR038718">
    <property type="entry name" value="SNF2-like_sf"/>
</dbReference>
<dbReference type="InterPro" id="IPR049730">
    <property type="entry name" value="SNF2/RAD54-like_C"/>
</dbReference>
<dbReference type="InterPro" id="IPR000330">
    <property type="entry name" value="SNF2_N"/>
</dbReference>
<dbReference type="PANTHER" id="PTHR45685:SF2">
    <property type="entry name" value="CHROMATIN-REMODELING ATPASE INO80"/>
    <property type="match status" value="1"/>
</dbReference>
<dbReference type="PANTHER" id="PTHR45685">
    <property type="entry name" value="HELICASE SRCAP-RELATED"/>
    <property type="match status" value="1"/>
</dbReference>
<dbReference type="Pfam" id="PF13892">
    <property type="entry name" value="DBINO"/>
    <property type="match status" value="1"/>
</dbReference>
<dbReference type="Pfam" id="PF00271">
    <property type="entry name" value="Helicase_C"/>
    <property type="match status" value="1"/>
</dbReference>
<dbReference type="Pfam" id="PF00176">
    <property type="entry name" value="SNF2-rel_dom"/>
    <property type="match status" value="1"/>
</dbReference>
<dbReference type="SMART" id="SM00487">
    <property type="entry name" value="DEXDc"/>
    <property type="match status" value="1"/>
</dbReference>
<dbReference type="SMART" id="SM00490">
    <property type="entry name" value="HELICc"/>
    <property type="match status" value="1"/>
</dbReference>
<dbReference type="SUPFAM" id="SSF52540">
    <property type="entry name" value="P-loop containing nucleoside triphosphate hydrolases"/>
    <property type="match status" value="2"/>
</dbReference>
<dbReference type="PROSITE" id="PS51413">
    <property type="entry name" value="DBINO"/>
    <property type="match status" value="1"/>
</dbReference>
<dbReference type="PROSITE" id="PS51192">
    <property type="entry name" value="HELICASE_ATP_BIND_1"/>
    <property type="match status" value="1"/>
</dbReference>
<dbReference type="PROSITE" id="PS51194">
    <property type="entry name" value="HELICASE_CTER"/>
    <property type="match status" value="1"/>
</dbReference>
<name>INO80_PYRO7</name>